<evidence type="ECO:0000255" key="1">
    <source>
        <dbReference type="HAMAP-Rule" id="MF_00274"/>
    </source>
</evidence>
<gene>
    <name type="ordered locus">Oant_0022</name>
</gene>
<comment type="function">
    <text evidence="1">Binds to DNA and alters its conformation. May be involved in regulation of gene expression, nucleoid organization and DNA protection.</text>
</comment>
<comment type="subunit">
    <text evidence="1">Homodimer.</text>
</comment>
<comment type="subcellular location">
    <subcellularLocation>
        <location evidence="1">Cytoplasm</location>
        <location evidence="1">Nucleoid</location>
    </subcellularLocation>
</comment>
<comment type="similarity">
    <text evidence="1">Belongs to the YbaB/EbfC family.</text>
</comment>
<sequence>MRDMMGMMKQAKELQAKMKAMQDEIATMEASASSGGGLVTITLSGKGTLSALKIDPSLMKEEEVEILEDLIIAAHNDAKAKLEAAMAEKTQSLTAGLPIPPGFKLPF</sequence>
<accession>A6WUU9</accession>
<keyword id="KW-0963">Cytoplasm</keyword>
<keyword id="KW-0238">DNA-binding</keyword>
<keyword id="KW-1185">Reference proteome</keyword>
<feature type="chain" id="PRO_1000003788" description="Nucleoid-associated protein Oant_0022">
    <location>
        <begin position="1"/>
        <end position="107"/>
    </location>
</feature>
<dbReference type="EMBL" id="CP000758">
    <property type="protein sequence ID" value="ABS12753.1"/>
    <property type="molecule type" value="Genomic_DNA"/>
</dbReference>
<dbReference type="RefSeq" id="WP_010657829.1">
    <property type="nucleotide sequence ID" value="NC_009667.1"/>
</dbReference>
<dbReference type="SMR" id="A6WUU9"/>
<dbReference type="STRING" id="439375.Oant_0022"/>
<dbReference type="KEGG" id="oan:Oant_0022"/>
<dbReference type="eggNOG" id="COG0718">
    <property type="taxonomic scope" value="Bacteria"/>
</dbReference>
<dbReference type="HOGENOM" id="CLU_140930_0_1_5"/>
<dbReference type="PhylomeDB" id="A6WUU9"/>
<dbReference type="Proteomes" id="UP000002301">
    <property type="component" value="Chromosome 1"/>
</dbReference>
<dbReference type="GO" id="GO:0043590">
    <property type="term" value="C:bacterial nucleoid"/>
    <property type="evidence" value="ECO:0007669"/>
    <property type="project" value="UniProtKB-UniRule"/>
</dbReference>
<dbReference type="GO" id="GO:0005829">
    <property type="term" value="C:cytosol"/>
    <property type="evidence" value="ECO:0007669"/>
    <property type="project" value="TreeGrafter"/>
</dbReference>
<dbReference type="GO" id="GO:0003677">
    <property type="term" value="F:DNA binding"/>
    <property type="evidence" value="ECO:0007669"/>
    <property type="project" value="UniProtKB-UniRule"/>
</dbReference>
<dbReference type="Gene3D" id="3.30.1310.10">
    <property type="entry name" value="Nucleoid-associated protein YbaB-like domain"/>
    <property type="match status" value="1"/>
</dbReference>
<dbReference type="HAMAP" id="MF_00274">
    <property type="entry name" value="DNA_YbaB_EbfC"/>
    <property type="match status" value="1"/>
</dbReference>
<dbReference type="InterPro" id="IPR036894">
    <property type="entry name" value="YbaB-like_sf"/>
</dbReference>
<dbReference type="InterPro" id="IPR004401">
    <property type="entry name" value="YbaB/EbfC"/>
</dbReference>
<dbReference type="NCBIfam" id="TIGR00103">
    <property type="entry name" value="DNA_YbaB_EbfC"/>
    <property type="match status" value="1"/>
</dbReference>
<dbReference type="PANTHER" id="PTHR33449">
    <property type="entry name" value="NUCLEOID-ASSOCIATED PROTEIN YBAB"/>
    <property type="match status" value="1"/>
</dbReference>
<dbReference type="PANTHER" id="PTHR33449:SF1">
    <property type="entry name" value="NUCLEOID-ASSOCIATED PROTEIN YBAB"/>
    <property type="match status" value="1"/>
</dbReference>
<dbReference type="Pfam" id="PF02575">
    <property type="entry name" value="YbaB_DNA_bd"/>
    <property type="match status" value="1"/>
</dbReference>
<dbReference type="PIRSF" id="PIRSF004555">
    <property type="entry name" value="UCP004555"/>
    <property type="match status" value="1"/>
</dbReference>
<dbReference type="SUPFAM" id="SSF82607">
    <property type="entry name" value="YbaB-like"/>
    <property type="match status" value="1"/>
</dbReference>
<organism>
    <name type="scientific">Brucella anthropi (strain ATCC 49188 / DSM 6882 / CCUG 24695 / JCM 21032 / LMG 3331 / NBRC 15819 / NCTC 12168 / Alc 37)</name>
    <name type="common">Ochrobactrum anthropi</name>
    <dbReference type="NCBI Taxonomy" id="439375"/>
    <lineage>
        <taxon>Bacteria</taxon>
        <taxon>Pseudomonadati</taxon>
        <taxon>Pseudomonadota</taxon>
        <taxon>Alphaproteobacteria</taxon>
        <taxon>Hyphomicrobiales</taxon>
        <taxon>Brucellaceae</taxon>
        <taxon>Brucella/Ochrobactrum group</taxon>
        <taxon>Brucella</taxon>
    </lineage>
</organism>
<reference key="1">
    <citation type="journal article" date="2011" name="J. Bacteriol.">
        <title>Genome of Ochrobactrum anthropi ATCC 49188 T, a versatile opportunistic pathogen and symbiont of several eukaryotic hosts.</title>
        <authorList>
            <person name="Chain P.S."/>
            <person name="Lang D.M."/>
            <person name="Comerci D.J."/>
            <person name="Malfatti S.A."/>
            <person name="Vergez L.M."/>
            <person name="Shin M."/>
            <person name="Ugalde R.A."/>
            <person name="Garcia E."/>
            <person name="Tolmasky M.E."/>
        </authorList>
    </citation>
    <scope>NUCLEOTIDE SEQUENCE [LARGE SCALE GENOMIC DNA]</scope>
    <source>
        <strain>ATCC 49188 / DSM 6882 / CCUG 24695 / JCM 21032 / LMG 3331 / NBRC 15819 / NCTC 12168 / Alc 37</strain>
    </source>
</reference>
<name>Y022_BRUA4</name>
<protein>
    <recommendedName>
        <fullName evidence="1">Nucleoid-associated protein Oant_0022</fullName>
    </recommendedName>
</protein>
<proteinExistence type="inferred from homology"/>